<protein>
    <recommendedName>
        <fullName evidence="1">Argininosuccinate synthase</fullName>
        <ecNumber evidence="1">6.3.4.5</ecNumber>
    </recommendedName>
    <alternativeName>
        <fullName evidence="1">Citrulline--aspartate ligase</fullName>
    </alternativeName>
</protein>
<reference key="1">
    <citation type="journal article" date="2003" name="Nat. Genet.">
        <title>Comparative analysis of the genome sequences of Bordetella pertussis, Bordetella parapertussis and Bordetella bronchiseptica.</title>
        <authorList>
            <person name="Parkhill J."/>
            <person name="Sebaihia M."/>
            <person name="Preston A."/>
            <person name="Murphy L.D."/>
            <person name="Thomson N.R."/>
            <person name="Harris D.E."/>
            <person name="Holden M.T.G."/>
            <person name="Churcher C.M."/>
            <person name="Bentley S.D."/>
            <person name="Mungall K.L."/>
            <person name="Cerdeno-Tarraga A.-M."/>
            <person name="Temple L."/>
            <person name="James K.D."/>
            <person name="Harris B."/>
            <person name="Quail M.A."/>
            <person name="Achtman M."/>
            <person name="Atkin R."/>
            <person name="Baker S."/>
            <person name="Basham D."/>
            <person name="Bason N."/>
            <person name="Cherevach I."/>
            <person name="Chillingworth T."/>
            <person name="Collins M."/>
            <person name="Cronin A."/>
            <person name="Davis P."/>
            <person name="Doggett J."/>
            <person name="Feltwell T."/>
            <person name="Goble A."/>
            <person name="Hamlin N."/>
            <person name="Hauser H."/>
            <person name="Holroyd S."/>
            <person name="Jagels K."/>
            <person name="Leather S."/>
            <person name="Moule S."/>
            <person name="Norberczak H."/>
            <person name="O'Neil S."/>
            <person name="Ormond D."/>
            <person name="Price C."/>
            <person name="Rabbinowitsch E."/>
            <person name="Rutter S."/>
            <person name="Sanders M."/>
            <person name="Saunders D."/>
            <person name="Seeger K."/>
            <person name="Sharp S."/>
            <person name="Simmonds M."/>
            <person name="Skelton J."/>
            <person name="Squares R."/>
            <person name="Squares S."/>
            <person name="Stevens K."/>
            <person name="Unwin L."/>
            <person name="Whitehead S."/>
            <person name="Barrell B.G."/>
            <person name="Maskell D.J."/>
        </authorList>
    </citation>
    <scope>NUCLEOTIDE SEQUENCE [LARGE SCALE GENOMIC DNA]</scope>
    <source>
        <strain>12822 / ATCC BAA-587 / NCTC 13253</strain>
    </source>
</reference>
<organism>
    <name type="scientific">Bordetella parapertussis (strain 12822 / ATCC BAA-587 / NCTC 13253)</name>
    <dbReference type="NCBI Taxonomy" id="257311"/>
    <lineage>
        <taxon>Bacteria</taxon>
        <taxon>Pseudomonadati</taxon>
        <taxon>Pseudomonadota</taxon>
        <taxon>Betaproteobacteria</taxon>
        <taxon>Burkholderiales</taxon>
        <taxon>Alcaligenaceae</taxon>
        <taxon>Bordetella</taxon>
    </lineage>
</organism>
<sequence length="445" mass="49366">MTTILPNLPTGQKVGIAFSGGLDTSAALLWMRQKGAVPYAYTANLGQPDEPDYDEIPRRAMQYGAEAARLVDCRAQLVAEGIAALQAGAFHISTAGLTYFNTTPIGRAVTGTMLVAAMKEDGVNIWGDGSTFKGNDIERFYRYGLLTNPDLKIYKPWLDQTFIDELGGRAEMSEYMRQAGFDYKMSAEKAYSTDSNMLGATHEAKDLELLNSGIRIVQPIMGVAFWQDSVQIKAEEVTVRFEEGQPVALNGVEYADPVELLLEANRIGGRHGLGMSDQIENRIIEAKSRGIYEAPGLALLFIAYERLVTGIHNEDTIEQYRENGRKLGRLLYQGRWFDPQAIMLRETAQRWVARAITGEVTLELRRGNDYSLLNTESANLTYAPERLSMEKVENAPFTPADRIGQLTMRNLDIVDTREKLFTYVKTGLLAPSAGSALPQIKDGKK</sequence>
<name>ASSY_BORPA</name>
<gene>
    <name evidence="1" type="primary">argG</name>
    <name type="ordered locus">BPP2541</name>
</gene>
<keyword id="KW-0028">Amino-acid biosynthesis</keyword>
<keyword id="KW-0055">Arginine biosynthesis</keyword>
<keyword id="KW-0067">ATP-binding</keyword>
<keyword id="KW-0963">Cytoplasm</keyword>
<keyword id="KW-0436">Ligase</keyword>
<keyword id="KW-0547">Nucleotide-binding</keyword>
<comment type="catalytic activity">
    <reaction evidence="1">
        <text>L-citrulline + L-aspartate + ATP = 2-(N(omega)-L-arginino)succinate + AMP + diphosphate + H(+)</text>
        <dbReference type="Rhea" id="RHEA:10932"/>
        <dbReference type="ChEBI" id="CHEBI:15378"/>
        <dbReference type="ChEBI" id="CHEBI:29991"/>
        <dbReference type="ChEBI" id="CHEBI:30616"/>
        <dbReference type="ChEBI" id="CHEBI:33019"/>
        <dbReference type="ChEBI" id="CHEBI:57472"/>
        <dbReference type="ChEBI" id="CHEBI:57743"/>
        <dbReference type="ChEBI" id="CHEBI:456215"/>
        <dbReference type="EC" id="6.3.4.5"/>
    </reaction>
</comment>
<comment type="pathway">
    <text evidence="1">Amino-acid biosynthesis; L-arginine biosynthesis; L-arginine from L-ornithine and carbamoyl phosphate: step 2/3.</text>
</comment>
<comment type="subunit">
    <text evidence="1">Homotetramer.</text>
</comment>
<comment type="subcellular location">
    <subcellularLocation>
        <location evidence="1">Cytoplasm</location>
    </subcellularLocation>
</comment>
<comment type="similarity">
    <text evidence="1">Belongs to the argininosuccinate synthase family. Type 2 subfamily.</text>
</comment>
<proteinExistence type="inferred from homology"/>
<accession>Q7W7H8</accession>
<evidence type="ECO:0000255" key="1">
    <source>
        <dbReference type="HAMAP-Rule" id="MF_00581"/>
    </source>
</evidence>
<dbReference type="EC" id="6.3.4.5" evidence="1"/>
<dbReference type="EMBL" id="BX640430">
    <property type="protein sequence ID" value="CAE37835.1"/>
    <property type="molecule type" value="Genomic_DNA"/>
</dbReference>
<dbReference type="RefSeq" id="WP_003812940.1">
    <property type="nucleotide sequence ID" value="NC_002928.3"/>
</dbReference>
<dbReference type="SMR" id="Q7W7H8"/>
<dbReference type="GeneID" id="93204328"/>
<dbReference type="KEGG" id="bpa:BPP2541"/>
<dbReference type="HOGENOM" id="CLU_032784_4_1_4"/>
<dbReference type="UniPathway" id="UPA00068">
    <property type="reaction ID" value="UER00113"/>
</dbReference>
<dbReference type="Proteomes" id="UP000001421">
    <property type="component" value="Chromosome"/>
</dbReference>
<dbReference type="GO" id="GO:0005737">
    <property type="term" value="C:cytoplasm"/>
    <property type="evidence" value="ECO:0007669"/>
    <property type="project" value="UniProtKB-SubCell"/>
</dbReference>
<dbReference type="GO" id="GO:0004055">
    <property type="term" value="F:argininosuccinate synthase activity"/>
    <property type="evidence" value="ECO:0007669"/>
    <property type="project" value="UniProtKB-UniRule"/>
</dbReference>
<dbReference type="GO" id="GO:0005524">
    <property type="term" value="F:ATP binding"/>
    <property type="evidence" value="ECO:0007669"/>
    <property type="project" value="UniProtKB-UniRule"/>
</dbReference>
<dbReference type="GO" id="GO:0042803">
    <property type="term" value="F:protein homodimerization activity"/>
    <property type="evidence" value="ECO:0007669"/>
    <property type="project" value="InterPro"/>
</dbReference>
<dbReference type="GO" id="GO:0000053">
    <property type="term" value="P:argininosuccinate metabolic process"/>
    <property type="evidence" value="ECO:0007669"/>
    <property type="project" value="TreeGrafter"/>
</dbReference>
<dbReference type="GO" id="GO:0006526">
    <property type="term" value="P:L-arginine biosynthetic process"/>
    <property type="evidence" value="ECO:0007669"/>
    <property type="project" value="UniProtKB-UniRule"/>
</dbReference>
<dbReference type="GO" id="GO:0000050">
    <property type="term" value="P:urea cycle"/>
    <property type="evidence" value="ECO:0007669"/>
    <property type="project" value="TreeGrafter"/>
</dbReference>
<dbReference type="CDD" id="cd01999">
    <property type="entry name" value="ASS"/>
    <property type="match status" value="1"/>
</dbReference>
<dbReference type="FunFam" id="1.10.287.400:FF:000001">
    <property type="entry name" value="Argininosuccinate synthase"/>
    <property type="match status" value="1"/>
</dbReference>
<dbReference type="Gene3D" id="1.10.287.400">
    <property type="match status" value="1"/>
</dbReference>
<dbReference type="Gene3D" id="3.90.1260.10">
    <property type="entry name" value="Argininosuccinate synthetase, chain A, domain 2"/>
    <property type="match status" value="1"/>
</dbReference>
<dbReference type="Gene3D" id="3.40.50.620">
    <property type="entry name" value="HUPs"/>
    <property type="match status" value="1"/>
</dbReference>
<dbReference type="HAMAP" id="MF_00581">
    <property type="entry name" value="Arg_succ_synth_type2"/>
    <property type="match status" value="1"/>
</dbReference>
<dbReference type="InterPro" id="IPR023437">
    <property type="entry name" value="Arg_succ_synth_type2_subfam"/>
</dbReference>
<dbReference type="InterPro" id="IPR048268">
    <property type="entry name" value="Arginosuc_syn_C"/>
</dbReference>
<dbReference type="InterPro" id="IPR048267">
    <property type="entry name" value="Arginosuc_syn_N"/>
</dbReference>
<dbReference type="InterPro" id="IPR001518">
    <property type="entry name" value="Arginosuc_synth"/>
</dbReference>
<dbReference type="InterPro" id="IPR018223">
    <property type="entry name" value="Arginosuc_synth_CS"/>
</dbReference>
<dbReference type="InterPro" id="IPR023434">
    <property type="entry name" value="Arginosuc_synth_type_1_subfam"/>
</dbReference>
<dbReference type="InterPro" id="IPR024074">
    <property type="entry name" value="AS_cat/multimer_dom_body"/>
</dbReference>
<dbReference type="InterPro" id="IPR024073">
    <property type="entry name" value="AS_multimer_C_tail"/>
</dbReference>
<dbReference type="InterPro" id="IPR014729">
    <property type="entry name" value="Rossmann-like_a/b/a_fold"/>
</dbReference>
<dbReference type="NCBIfam" id="TIGR00032">
    <property type="entry name" value="argG"/>
    <property type="match status" value="1"/>
</dbReference>
<dbReference type="NCBIfam" id="NF003779">
    <property type="entry name" value="PRK05370.1"/>
    <property type="match status" value="1"/>
</dbReference>
<dbReference type="PANTHER" id="PTHR11587">
    <property type="entry name" value="ARGININOSUCCINATE SYNTHASE"/>
    <property type="match status" value="1"/>
</dbReference>
<dbReference type="PANTHER" id="PTHR11587:SF2">
    <property type="entry name" value="ARGININOSUCCINATE SYNTHASE"/>
    <property type="match status" value="1"/>
</dbReference>
<dbReference type="Pfam" id="PF20979">
    <property type="entry name" value="Arginosuc_syn_C"/>
    <property type="match status" value="1"/>
</dbReference>
<dbReference type="Pfam" id="PF00764">
    <property type="entry name" value="Arginosuc_synth"/>
    <property type="match status" value="1"/>
</dbReference>
<dbReference type="SUPFAM" id="SSF52402">
    <property type="entry name" value="Adenine nucleotide alpha hydrolases-like"/>
    <property type="match status" value="1"/>
</dbReference>
<dbReference type="SUPFAM" id="SSF69864">
    <property type="entry name" value="Argininosuccinate synthetase, C-terminal domain"/>
    <property type="match status" value="1"/>
</dbReference>
<dbReference type="PROSITE" id="PS00564">
    <property type="entry name" value="ARGININOSUCCIN_SYN_1"/>
    <property type="match status" value="1"/>
</dbReference>
<dbReference type="PROSITE" id="PS00565">
    <property type="entry name" value="ARGININOSUCCIN_SYN_2"/>
    <property type="match status" value="1"/>
</dbReference>
<feature type="chain" id="PRO_0000148691" description="Argininosuccinate synthase">
    <location>
        <begin position="1"/>
        <end position="445"/>
    </location>
</feature>
<feature type="binding site" evidence="1">
    <location>
        <begin position="17"/>
        <end position="25"/>
    </location>
    <ligand>
        <name>ATP</name>
        <dbReference type="ChEBI" id="CHEBI:30616"/>
    </ligand>
</feature>
<feature type="binding site" evidence="1">
    <location>
        <position position="43"/>
    </location>
    <ligand>
        <name>ATP</name>
        <dbReference type="ChEBI" id="CHEBI:30616"/>
    </ligand>
</feature>
<feature type="binding site" evidence="1">
    <location>
        <position position="99"/>
    </location>
    <ligand>
        <name>L-citrulline</name>
        <dbReference type="ChEBI" id="CHEBI:57743"/>
    </ligand>
</feature>
<feature type="binding site" evidence="1">
    <location>
        <position position="129"/>
    </location>
    <ligand>
        <name>ATP</name>
        <dbReference type="ChEBI" id="CHEBI:30616"/>
    </ligand>
</feature>
<feature type="binding site" evidence="1">
    <location>
        <position position="131"/>
    </location>
    <ligand>
        <name>ATP</name>
        <dbReference type="ChEBI" id="CHEBI:30616"/>
    </ligand>
</feature>
<feature type="binding site" evidence="1">
    <location>
        <position position="131"/>
    </location>
    <ligand>
        <name>L-aspartate</name>
        <dbReference type="ChEBI" id="CHEBI:29991"/>
    </ligand>
</feature>
<feature type="binding site" evidence="1">
    <location>
        <position position="135"/>
    </location>
    <ligand>
        <name>L-aspartate</name>
        <dbReference type="ChEBI" id="CHEBI:29991"/>
    </ligand>
</feature>
<feature type="binding site" evidence="1">
    <location>
        <position position="135"/>
    </location>
    <ligand>
        <name>L-citrulline</name>
        <dbReference type="ChEBI" id="CHEBI:57743"/>
    </ligand>
</feature>
<feature type="binding site" evidence="1">
    <location>
        <position position="136"/>
    </location>
    <ligand>
        <name>ATP</name>
        <dbReference type="ChEBI" id="CHEBI:30616"/>
    </ligand>
</feature>
<feature type="binding site" evidence="1">
    <location>
        <position position="136"/>
    </location>
    <ligand>
        <name>L-aspartate</name>
        <dbReference type="ChEBI" id="CHEBI:29991"/>
    </ligand>
</feature>
<feature type="binding site" evidence="1">
    <location>
        <position position="139"/>
    </location>
    <ligand>
        <name>L-citrulline</name>
        <dbReference type="ChEBI" id="CHEBI:57743"/>
    </ligand>
</feature>
<feature type="binding site" evidence="1">
    <location>
        <position position="192"/>
    </location>
    <ligand>
        <name>L-citrulline</name>
        <dbReference type="ChEBI" id="CHEBI:57743"/>
    </ligand>
</feature>
<feature type="binding site" evidence="1">
    <location>
        <position position="194"/>
    </location>
    <ligand>
        <name>ATP</name>
        <dbReference type="ChEBI" id="CHEBI:30616"/>
    </ligand>
</feature>
<feature type="binding site" evidence="1">
    <location>
        <position position="201"/>
    </location>
    <ligand>
        <name>L-citrulline</name>
        <dbReference type="ChEBI" id="CHEBI:57743"/>
    </ligand>
</feature>
<feature type="binding site" evidence="1">
    <location>
        <position position="203"/>
    </location>
    <ligand>
        <name>L-citrulline</name>
        <dbReference type="ChEBI" id="CHEBI:57743"/>
    </ligand>
</feature>
<feature type="binding site" evidence="1">
    <location>
        <position position="280"/>
    </location>
    <ligand>
        <name>L-citrulline</name>
        <dbReference type="ChEBI" id="CHEBI:57743"/>
    </ligand>
</feature>